<gene>
    <name evidence="1" type="primary">nuoD</name>
    <name type="ordered locus">GTNG_3299</name>
</gene>
<evidence type="ECO:0000255" key="1">
    <source>
        <dbReference type="HAMAP-Rule" id="MF_01358"/>
    </source>
</evidence>
<accession>A4ITI4</accession>
<dbReference type="EC" id="7.1.1.-" evidence="1"/>
<dbReference type="EMBL" id="CP000557">
    <property type="protein sequence ID" value="ABO68638.1"/>
    <property type="molecule type" value="Genomic_DNA"/>
</dbReference>
<dbReference type="RefSeq" id="WP_011888393.1">
    <property type="nucleotide sequence ID" value="NC_009328.1"/>
</dbReference>
<dbReference type="SMR" id="A4ITI4"/>
<dbReference type="KEGG" id="gtn:GTNG_3299"/>
<dbReference type="eggNOG" id="COG0649">
    <property type="taxonomic scope" value="Bacteria"/>
</dbReference>
<dbReference type="HOGENOM" id="CLU_015134_1_2_9"/>
<dbReference type="Proteomes" id="UP000001578">
    <property type="component" value="Chromosome"/>
</dbReference>
<dbReference type="GO" id="GO:0005886">
    <property type="term" value="C:plasma membrane"/>
    <property type="evidence" value="ECO:0007669"/>
    <property type="project" value="UniProtKB-SubCell"/>
</dbReference>
<dbReference type="GO" id="GO:0051287">
    <property type="term" value="F:NAD binding"/>
    <property type="evidence" value="ECO:0007669"/>
    <property type="project" value="InterPro"/>
</dbReference>
<dbReference type="GO" id="GO:0050136">
    <property type="term" value="F:NADH:ubiquinone reductase (non-electrogenic) activity"/>
    <property type="evidence" value="ECO:0007669"/>
    <property type="project" value="UniProtKB-UniRule"/>
</dbReference>
<dbReference type="GO" id="GO:0048038">
    <property type="term" value="F:quinone binding"/>
    <property type="evidence" value="ECO:0007669"/>
    <property type="project" value="UniProtKB-KW"/>
</dbReference>
<dbReference type="Gene3D" id="1.10.645.10">
    <property type="entry name" value="Cytochrome-c3 Hydrogenase, chain B"/>
    <property type="match status" value="1"/>
</dbReference>
<dbReference type="HAMAP" id="MF_01358">
    <property type="entry name" value="NDH1_NuoD"/>
    <property type="match status" value="1"/>
</dbReference>
<dbReference type="InterPro" id="IPR001135">
    <property type="entry name" value="NADH_Q_OxRdtase_suD"/>
</dbReference>
<dbReference type="InterPro" id="IPR022885">
    <property type="entry name" value="NDH1_su_D/H"/>
</dbReference>
<dbReference type="InterPro" id="IPR029014">
    <property type="entry name" value="NiFe-Hase_large"/>
</dbReference>
<dbReference type="NCBIfam" id="NF004739">
    <property type="entry name" value="PRK06075.1"/>
    <property type="match status" value="1"/>
</dbReference>
<dbReference type="NCBIfam" id="NF008974">
    <property type="entry name" value="PRK12322.1"/>
    <property type="match status" value="1"/>
</dbReference>
<dbReference type="PANTHER" id="PTHR11993:SF10">
    <property type="entry name" value="NADH DEHYDROGENASE [UBIQUINONE] IRON-SULFUR PROTEIN 2, MITOCHONDRIAL"/>
    <property type="match status" value="1"/>
</dbReference>
<dbReference type="PANTHER" id="PTHR11993">
    <property type="entry name" value="NADH-UBIQUINONE OXIDOREDUCTASE 49 KDA SUBUNIT"/>
    <property type="match status" value="1"/>
</dbReference>
<dbReference type="Pfam" id="PF00346">
    <property type="entry name" value="Complex1_49kDa"/>
    <property type="match status" value="2"/>
</dbReference>
<dbReference type="SUPFAM" id="SSF56762">
    <property type="entry name" value="HydB/Nqo4-like"/>
    <property type="match status" value="1"/>
</dbReference>
<proteinExistence type="inferred from homology"/>
<name>NUOD_GEOTN</name>
<organism>
    <name type="scientific">Geobacillus thermodenitrificans (strain NG80-2)</name>
    <dbReference type="NCBI Taxonomy" id="420246"/>
    <lineage>
        <taxon>Bacteria</taxon>
        <taxon>Bacillati</taxon>
        <taxon>Bacillota</taxon>
        <taxon>Bacilli</taxon>
        <taxon>Bacillales</taxon>
        <taxon>Anoxybacillaceae</taxon>
        <taxon>Geobacillus</taxon>
    </lineage>
</organism>
<reference key="1">
    <citation type="journal article" date="2007" name="Proc. Natl. Acad. Sci. U.S.A.">
        <title>Genome and proteome of long-chain alkane degrading Geobacillus thermodenitrificans NG80-2 isolated from a deep-subsurface oil reservoir.</title>
        <authorList>
            <person name="Feng L."/>
            <person name="Wang W."/>
            <person name="Cheng J."/>
            <person name="Ren Y."/>
            <person name="Zhao G."/>
            <person name="Gao C."/>
            <person name="Tang Y."/>
            <person name="Liu X."/>
            <person name="Han W."/>
            <person name="Peng X."/>
            <person name="Liu R."/>
            <person name="Wang L."/>
        </authorList>
    </citation>
    <scope>NUCLEOTIDE SEQUENCE [LARGE SCALE GENOMIC DNA]</scope>
    <source>
        <strain>NG80-2</strain>
    </source>
</reference>
<sequence length="366" mass="41697">MLRTEEMILNVGPQHPSTHGVFRLILKIDGEIIQEATPVIGYLHRGTEKIAEGLQYTQIIPYTDRMDYLSAMTNNYVLCHAVETMMGIEVPERAEYLRVLAMELGRIASHLVWWGTYLLDLGATSPFLYAFREREMIINLLNELSGARLTFNYMRIGGVKWDAPDGWIDKVKQFVPYMREKLAGYHDLVTGNEIFRERVTGVGRYTKEEAISYSLSGVNLRSTGVKWDLRKDEPYSVYDRFDFDVPVREGGDCLARYECRMAEIEQSLRIIEQACEQFPADGPIMGKLPRIIKAPPGETFVRIEAPRGEIGCYIASDGKKEPYRLKFRRPSFYNLQILPKLLKGENLANVIAILGSIDIVLGEVDG</sequence>
<keyword id="KW-1003">Cell membrane</keyword>
<keyword id="KW-0472">Membrane</keyword>
<keyword id="KW-0520">NAD</keyword>
<keyword id="KW-0874">Quinone</keyword>
<keyword id="KW-1278">Translocase</keyword>
<keyword id="KW-0813">Transport</keyword>
<protein>
    <recommendedName>
        <fullName evidence="1">NADH-quinone oxidoreductase subunit D</fullName>
        <ecNumber evidence="1">7.1.1.-</ecNumber>
    </recommendedName>
    <alternativeName>
        <fullName evidence="1">NADH dehydrogenase I subunit D</fullName>
    </alternativeName>
    <alternativeName>
        <fullName evidence="1">NDH-1 subunit D</fullName>
    </alternativeName>
</protein>
<feature type="chain" id="PRO_0000357820" description="NADH-quinone oxidoreductase subunit D">
    <location>
        <begin position="1"/>
        <end position="366"/>
    </location>
</feature>
<comment type="function">
    <text evidence="1">NDH-1 shuttles electrons from NADH, via FMN and iron-sulfur (Fe-S) centers, to quinones in the respiratory chain. The immediate electron acceptor for the enzyme in this species is believed to be a menaquinone. Couples the redox reaction to proton translocation (for every two electrons transferred, four hydrogen ions are translocated across the cytoplasmic membrane), and thus conserves the redox energy in a proton gradient.</text>
</comment>
<comment type="catalytic activity">
    <reaction evidence="1">
        <text>a quinone + NADH + 5 H(+)(in) = a quinol + NAD(+) + 4 H(+)(out)</text>
        <dbReference type="Rhea" id="RHEA:57888"/>
        <dbReference type="ChEBI" id="CHEBI:15378"/>
        <dbReference type="ChEBI" id="CHEBI:24646"/>
        <dbReference type="ChEBI" id="CHEBI:57540"/>
        <dbReference type="ChEBI" id="CHEBI:57945"/>
        <dbReference type="ChEBI" id="CHEBI:132124"/>
    </reaction>
</comment>
<comment type="subunit">
    <text evidence="1">NDH-1 is composed of 14 different subunits. Subunits NuoB, C, D, E, F, and G constitute the peripheral sector of the complex.</text>
</comment>
<comment type="subcellular location">
    <subcellularLocation>
        <location evidence="1">Cell membrane</location>
        <topology evidence="1">Peripheral membrane protein</topology>
        <orientation evidence="1">Cytoplasmic side</orientation>
    </subcellularLocation>
</comment>
<comment type="similarity">
    <text evidence="1">Belongs to the complex I 49 kDa subunit family.</text>
</comment>